<sequence length="65" mass="7181">MSTHSTFFNRLYSIFLIFSIISELSSIGSCILSESVTCLNNSLMSFLIQSNSLLNSLIVCRPLSS</sequence>
<proteinExistence type="predicted"/>
<keyword id="KW-1185">Reference proteome</keyword>
<feature type="chain" id="PRO_0000099683" description="Uncharacterized 7.2 kDa protein">
    <location>
        <begin position="1"/>
        <end position="65"/>
    </location>
</feature>
<dbReference type="EMBL" id="M35027">
    <property type="protein sequence ID" value="AAA47987.1"/>
    <property type="molecule type" value="Genomic_DNA"/>
</dbReference>
<dbReference type="PIR" id="D33172">
    <property type="entry name" value="D33172"/>
</dbReference>
<dbReference type="SMR" id="P21123"/>
<dbReference type="Proteomes" id="UP000008269">
    <property type="component" value="Segment"/>
</dbReference>
<reference key="1">
    <citation type="journal article" date="1990" name="Virology">
        <title>The complete DNA sequence of vaccinia virus.</title>
        <authorList>
            <person name="Goebel S.J."/>
            <person name="Johnson G.P."/>
            <person name="Perkus M.E."/>
            <person name="Davis S.W."/>
            <person name="Winslow J.P."/>
            <person name="Paoletti E."/>
        </authorList>
    </citation>
    <scope>NUCLEOTIDE SEQUENCE [LARGE SCALE GENOMIC DNA]</scope>
</reference>
<reference key="2">
    <citation type="journal article" date="1990" name="Virology">
        <title>Appendix to 'The complete DNA sequence of vaccinia virus'.</title>
        <authorList>
            <person name="Goebel S.J."/>
            <person name="Johnson G.P."/>
            <person name="Perkus M.E."/>
            <person name="Davis S.W."/>
            <person name="Winslow J.P."/>
            <person name="Paoletti E."/>
        </authorList>
    </citation>
    <scope>COMPLETE GENOME</scope>
</reference>
<protein>
    <recommendedName>
        <fullName>Uncharacterized 7.2 kDa protein</fullName>
    </recommendedName>
</protein>
<organismHost>
    <name type="scientific">Homo sapiens</name>
    <name type="common">Human</name>
    <dbReference type="NCBI Taxonomy" id="9606"/>
</organismHost>
<name>YVCE_VACCC</name>
<accession>P21123</accession>
<gene>
    <name type="ORF">C ORF E</name>
</gene>
<organism>
    <name type="scientific">Vaccinia virus (strain Copenhagen)</name>
    <name type="common">VACV</name>
    <dbReference type="NCBI Taxonomy" id="10249"/>
    <lineage>
        <taxon>Viruses</taxon>
        <taxon>Varidnaviria</taxon>
        <taxon>Bamfordvirae</taxon>
        <taxon>Nucleocytoviricota</taxon>
        <taxon>Pokkesviricetes</taxon>
        <taxon>Chitovirales</taxon>
        <taxon>Poxviridae</taxon>
        <taxon>Chordopoxvirinae</taxon>
        <taxon>Orthopoxvirus</taxon>
        <taxon>Vaccinia virus</taxon>
    </lineage>
</organism>